<geneLocation type="plasmid">
    <name>sym pNGR234a</name>
</geneLocation>
<name>Y4AQ_SINFN</name>
<comment type="similarity">
    <text evidence="2">Belongs to the transposase 25 family.</text>
</comment>
<feature type="chain" id="PRO_0000200801" description="Uncharacterized protein y4aQ">
    <location>
        <begin position="1"/>
        <end position="188"/>
    </location>
</feature>
<feature type="region of interest" description="Disordered" evidence="1">
    <location>
        <begin position="57"/>
        <end position="80"/>
    </location>
</feature>
<sequence>MSRIILSLDAENADLKARVAFLEQQLFGPKSEKMTAIDPTQATLDLGDLTDIPAAANDDVAPVAEGPKQERRSPSRNIGRLPRHLPRYEELIEPESKICPCCSFELHCVGTDVSEALDIVPAVVRVKQTIRPSYACRAGESVIVQAPASARVMGESNVAPMRLAFCLAHARRKFVDVVKLTGSSEAGR</sequence>
<reference key="1">
    <citation type="journal article" date="1997" name="Nature">
        <title>Molecular basis of symbiosis between Rhizobium and legumes.</title>
        <authorList>
            <person name="Freiberg C.A."/>
            <person name="Fellay R."/>
            <person name="Bairoch A."/>
            <person name="Broughton W.J."/>
            <person name="Rosenthal A."/>
            <person name="Perret X."/>
        </authorList>
    </citation>
    <scope>NUCLEOTIDE SEQUENCE [LARGE SCALE GENOMIC DNA]</scope>
    <source>
        <strain>NBRC 101917 / NGR234</strain>
    </source>
</reference>
<reference key="2">
    <citation type="journal article" date="2009" name="Appl. Environ. Microbiol.">
        <title>Rhizobium sp. strain NGR234 possesses a remarkable number of secretion systems.</title>
        <authorList>
            <person name="Schmeisser C."/>
            <person name="Liesegang H."/>
            <person name="Krysciak D."/>
            <person name="Bakkou N."/>
            <person name="Le Quere A."/>
            <person name="Wollherr A."/>
            <person name="Heinemeyer I."/>
            <person name="Morgenstern B."/>
            <person name="Pommerening-Roeser A."/>
            <person name="Flores M."/>
            <person name="Palacios R."/>
            <person name="Brenner S."/>
            <person name="Gottschalk G."/>
            <person name="Schmitz R.A."/>
            <person name="Broughton W.J."/>
            <person name="Perret X."/>
            <person name="Strittmatter A.W."/>
            <person name="Streit W.R."/>
        </authorList>
    </citation>
    <scope>NUCLEOTIDE SEQUENCE [LARGE SCALE GENOMIC DNA]</scope>
    <source>
        <strain>NBRC 101917 / NGR234</strain>
    </source>
</reference>
<dbReference type="EMBL" id="U00090">
    <property type="protein sequence ID" value="AAB91614.1"/>
    <property type="molecule type" value="Genomic_DNA"/>
</dbReference>
<dbReference type="RefSeq" id="NP_443776.1">
    <property type="nucleotide sequence ID" value="NC_000914.2"/>
</dbReference>
<dbReference type="SMR" id="P55364"/>
<dbReference type="KEGG" id="rhi:NGR_a00310"/>
<dbReference type="PATRIC" id="fig|394.7.peg.29"/>
<dbReference type="eggNOG" id="COG4974">
    <property type="taxonomic scope" value="Bacteria"/>
</dbReference>
<dbReference type="HOGENOM" id="CLU_023034_7_0_5"/>
<dbReference type="OrthoDB" id="9800877at2"/>
<dbReference type="Proteomes" id="UP000001054">
    <property type="component" value="Plasmid pNGR234a"/>
</dbReference>
<dbReference type="InterPro" id="IPR052344">
    <property type="entry name" value="Transposase-related"/>
</dbReference>
<dbReference type="InterPro" id="IPR024463">
    <property type="entry name" value="Transposase_TnpC_homeodom"/>
</dbReference>
<dbReference type="InterPro" id="IPR024474">
    <property type="entry name" value="Znf_dom_IS66"/>
</dbReference>
<dbReference type="PANTHER" id="PTHR33678">
    <property type="entry name" value="BLL1576 PROTEIN"/>
    <property type="match status" value="1"/>
</dbReference>
<dbReference type="PANTHER" id="PTHR33678:SF1">
    <property type="entry name" value="BLL1576 PROTEIN"/>
    <property type="match status" value="1"/>
</dbReference>
<dbReference type="Pfam" id="PF13007">
    <property type="entry name" value="LZ_Tnp_IS66"/>
    <property type="match status" value="1"/>
</dbReference>
<dbReference type="Pfam" id="PF13005">
    <property type="entry name" value="zf-IS66"/>
    <property type="match status" value="1"/>
</dbReference>
<protein>
    <recommendedName>
        <fullName>Uncharacterized protein y4aQ</fullName>
    </recommendedName>
</protein>
<gene>
    <name type="ordered locus">NGR_a00310</name>
    <name type="ORF">y4aQ</name>
</gene>
<keyword id="KW-0614">Plasmid</keyword>
<keyword id="KW-1185">Reference proteome</keyword>
<accession>P55364</accession>
<proteinExistence type="inferred from homology"/>
<evidence type="ECO:0000256" key="1">
    <source>
        <dbReference type="SAM" id="MobiDB-lite"/>
    </source>
</evidence>
<evidence type="ECO:0000305" key="2"/>
<organism>
    <name type="scientific">Sinorhizobium fredii (strain NBRC 101917 / NGR234)</name>
    <dbReference type="NCBI Taxonomy" id="394"/>
    <lineage>
        <taxon>Bacteria</taxon>
        <taxon>Pseudomonadati</taxon>
        <taxon>Pseudomonadota</taxon>
        <taxon>Alphaproteobacteria</taxon>
        <taxon>Hyphomicrobiales</taxon>
        <taxon>Rhizobiaceae</taxon>
        <taxon>Sinorhizobium/Ensifer group</taxon>
        <taxon>Sinorhizobium</taxon>
    </lineage>
</organism>